<proteinExistence type="inferred from homology"/>
<gene>
    <name evidence="1" type="primary">rny</name>
    <name type="ordered locus">TM_1857</name>
</gene>
<protein>
    <recommendedName>
        <fullName evidence="1">Ribonuclease Y</fullName>
        <shortName evidence="1">RNase Y</shortName>
        <ecNumber evidence="1">3.1.-.-</ecNumber>
    </recommendedName>
</protein>
<keyword id="KW-1003">Cell membrane</keyword>
<keyword id="KW-0255">Endonuclease</keyword>
<keyword id="KW-0378">Hydrolase</keyword>
<keyword id="KW-0472">Membrane</keyword>
<keyword id="KW-0540">Nuclease</keyword>
<keyword id="KW-1185">Reference proteome</keyword>
<keyword id="KW-0694">RNA-binding</keyword>
<keyword id="KW-0812">Transmembrane</keyword>
<keyword id="KW-1133">Transmembrane helix</keyword>
<accession>Q9X2H2</accession>
<feature type="chain" id="PRO_0000163803" description="Ribonuclease Y">
    <location>
        <begin position="1"/>
        <end position="508"/>
    </location>
</feature>
<feature type="transmembrane region" description="Helical" evidence="1">
    <location>
        <begin position="1"/>
        <end position="21"/>
    </location>
</feature>
<feature type="domain" description="KH" evidence="1">
    <location>
        <begin position="198"/>
        <end position="283"/>
    </location>
</feature>
<feature type="domain" description="HD" evidence="2">
    <location>
        <begin position="324"/>
        <end position="417"/>
    </location>
</feature>
<name>RNY_THEMA</name>
<comment type="function">
    <text evidence="1">Endoribonuclease that initiates mRNA decay.</text>
</comment>
<comment type="subcellular location">
    <subcellularLocation>
        <location evidence="1">Cell membrane</location>
        <topology evidence="1">Single-pass membrane protein</topology>
    </subcellularLocation>
</comment>
<comment type="similarity">
    <text evidence="1">Belongs to the RNase Y family.</text>
</comment>
<organism>
    <name type="scientific">Thermotoga maritima (strain ATCC 43589 / DSM 3109 / JCM 10099 / NBRC 100826 / MSB8)</name>
    <dbReference type="NCBI Taxonomy" id="243274"/>
    <lineage>
        <taxon>Bacteria</taxon>
        <taxon>Thermotogati</taxon>
        <taxon>Thermotogota</taxon>
        <taxon>Thermotogae</taxon>
        <taxon>Thermotogales</taxon>
        <taxon>Thermotogaceae</taxon>
        <taxon>Thermotoga</taxon>
    </lineage>
</organism>
<dbReference type="EC" id="3.1.-.-" evidence="1"/>
<dbReference type="EMBL" id="AE000512">
    <property type="protein sequence ID" value="AAD36919.1"/>
    <property type="molecule type" value="Genomic_DNA"/>
</dbReference>
<dbReference type="PIR" id="B72201">
    <property type="entry name" value="B72201"/>
</dbReference>
<dbReference type="RefSeq" id="NP_229653.1">
    <property type="nucleotide sequence ID" value="NC_000853.1"/>
</dbReference>
<dbReference type="FunCoup" id="Q9X2H2">
    <property type="interactions" value="89"/>
</dbReference>
<dbReference type="STRING" id="243274.TM_1857"/>
<dbReference type="PaxDb" id="243274-THEMA_04885"/>
<dbReference type="EnsemblBacteria" id="AAD36919">
    <property type="protein sequence ID" value="AAD36919"/>
    <property type="gene ID" value="TM_1857"/>
</dbReference>
<dbReference type="KEGG" id="tma:TM1857"/>
<dbReference type="KEGG" id="tmi:THEMA_04885"/>
<dbReference type="KEGG" id="tmw:THMA_1907"/>
<dbReference type="PATRIC" id="fig|243274.18.peg.945"/>
<dbReference type="eggNOG" id="COG1418">
    <property type="taxonomic scope" value="Bacteria"/>
</dbReference>
<dbReference type="InParanoid" id="Q9X2H2"/>
<dbReference type="OrthoDB" id="9803205at2"/>
<dbReference type="Proteomes" id="UP000008183">
    <property type="component" value="Chromosome"/>
</dbReference>
<dbReference type="GO" id="GO:0005886">
    <property type="term" value="C:plasma membrane"/>
    <property type="evidence" value="ECO:0007669"/>
    <property type="project" value="UniProtKB-SubCell"/>
</dbReference>
<dbReference type="GO" id="GO:0003723">
    <property type="term" value="F:RNA binding"/>
    <property type="evidence" value="ECO:0007669"/>
    <property type="project" value="UniProtKB-UniRule"/>
</dbReference>
<dbReference type="GO" id="GO:0004521">
    <property type="term" value="F:RNA endonuclease activity"/>
    <property type="evidence" value="ECO:0007669"/>
    <property type="project" value="UniProtKB-UniRule"/>
</dbReference>
<dbReference type="GO" id="GO:0006402">
    <property type="term" value="P:mRNA catabolic process"/>
    <property type="evidence" value="ECO:0007669"/>
    <property type="project" value="UniProtKB-UniRule"/>
</dbReference>
<dbReference type="CDD" id="cd00077">
    <property type="entry name" value="HDc"/>
    <property type="match status" value="1"/>
</dbReference>
<dbReference type="CDD" id="cd22431">
    <property type="entry name" value="KH-I_RNaseY"/>
    <property type="match status" value="1"/>
</dbReference>
<dbReference type="FunFam" id="1.10.3210.10:FF:000022">
    <property type="entry name" value="Ribonuclease Y"/>
    <property type="match status" value="1"/>
</dbReference>
<dbReference type="Gene3D" id="1.10.3210.10">
    <property type="entry name" value="Hypothetical protein af1432"/>
    <property type="match status" value="1"/>
</dbReference>
<dbReference type="Gene3D" id="3.30.1370.10">
    <property type="entry name" value="K Homology domain, type 1"/>
    <property type="match status" value="1"/>
</dbReference>
<dbReference type="HAMAP" id="MF_00335">
    <property type="entry name" value="RNase_Y"/>
    <property type="match status" value="1"/>
</dbReference>
<dbReference type="InterPro" id="IPR003607">
    <property type="entry name" value="HD/PDEase_dom"/>
</dbReference>
<dbReference type="InterPro" id="IPR006674">
    <property type="entry name" value="HD_domain"/>
</dbReference>
<dbReference type="InterPro" id="IPR006675">
    <property type="entry name" value="HDIG_dom"/>
</dbReference>
<dbReference type="InterPro" id="IPR004087">
    <property type="entry name" value="KH_dom"/>
</dbReference>
<dbReference type="InterPro" id="IPR004088">
    <property type="entry name" value="KH_dom_type_1"/>
</dbReference>
<dbReference type="InterPro" id="IPR036612">
    <property type="entry name" value="KH_dom_type_1_sf"/>
</dbReference>
<dbReference type="InterPro" id="IPR017705">
    <property type="entry name" value="Ribonuclease_Y"/>
</dbReference>
<dbReference type="InterPro" id="IPR022711">
    <property type="entry name" value="RNase_Y_N"/>
</dbReference>
<dbReference type="NCBIfam" id="TIGR00277">
    <property type="entry name" value="HDIG"/>
    <property type="match status" value="1"/>
</dbReference>
<dbReference type="NCBIfam" id="TIGR03319">
    <property type="entry name" value="RNase_Y"/>
    <property type="match status" value="1"/>
</dbReference>
<dbReference type="PANTHER" id="PTHR12826">
    <property type="entry name" value="RIBONUCLEASE Y"/>
    <property type="match status" value="1"/>
</dbReference>
<dbReference type="PANTHER" id="PTHR12826:SF15">
    <property type="entry name" value="RIBONUCLEASE Y"/>
    <property type="match status" value="1"/>
</dbReference>
<dbReference type="Pfam" id="PF01966">
    <property type="entry name" value="HD"/>
    <property type="match status" value="1"/>
</dbReference>
<dbReference type="Pfam" id="PF00013">
    <property type="entry name" value="KH_1"/>
    <property type="match status" value="1"/>
</dbReference>
<dbReference type="Pfam" id="PF12072">
    <property type="entry name" value="RNase_Y_N"/>
    <property type="match status" value="1"/>
</dbReference>
<dbReference type="SMART" id="SM00471">
    <property type="entry name" value="HDc"/>
    <property type="match status" value="1"/>
</dbReference>
<dbReference type="SMART" id="SM00322">
    <property type="entry name" value="KH"/>
    <property type="match status" value="1"/>
</dbReference>
<dbReference type="SUPFAM" id="SSF54791">
    <property type="entry name" value="Eukaryotic type KH-domain (KH-domain type I)"/>
    <property type="match status" value="1"/>
</dbReference>
<dbReference type="SUPFAM" id="SSF109604">
    <property type="entry name" value="HD-domain/PDEase-like"/>
    <property type="match status" value="1"/>
</dbReference>
<dbReference type="PROSITE" id="PS51831">
    <property type="entry name" value="HD"/>
    <property type="match status" value="1"/>
</dbReference>
<dbReference type="PROSITE" id="PS50084">
    <property type="entry name" value="KH_TYPE_1"/>
    <property type="match status" value="1"/>
</dbReference>
<evidence type="ECO:0000255" key="1">
    <source>
        <dbReference type="HAMAP-Rule" id="MF_00335"/>
    </source>
</evidence>
<evidence type="ECO:0000255" key="2">
    <source>
        <dbReference type="PROSITE-ProRule" id="PRU01175"/>
    </source>
</evidence>
<sequence length="508" mass="58171">MMLWYIVAGAGGLLIGYLIANYQINQKLRKAKEDAQTIIEKAEKEANEIKKKAIIEGREEVHRLREEFEKERSRREEELRALEERLLKREELLTRKEENLEKREQQVEELKANLEEKMREVEEKEKRIDEELKRLAGMTVEEARELILEEARQRYEHDLAKLYKEMKEQVEEEAEKEAKKVIAFAVQRYAPDYVGEITVSTVSLPSDDMKGRIIGREGRNIRTFEKITGVDLIIDDTPEVVVLSCFNPLRREIARITLEKLVADGRIHPARIEEMYEKAKQEVEKAIKEAGQEATFKAGVMGLHPELVKLLGKLKYRTSYGQNVLNHSIEVALLAGYMASELGLNADKARRGGLLHDIGKAVDQELEGSHTTIGAELARRYGEKEDIINMILSHHGEEEPMTPEAVLVAAADALSAARPGARRESLENYIKRLMKLEEIAKSFKYVEKAYAIQAGREIRVIVEPDKVDDALAEKLAYDISKKIEEELEYPGVLKVVVIREKRSVAYAK</sequence>
<reference key="1">
    <citation type="journal article" date="1999" name="Nature">
        <title>Evidence for lateral gene transfer between Archaea and Bacteria from genome sequence of Thermotoga maritima.</title>
        <authorList>
            <person name="Nelson K.E."/>
            <person name="Clayton R.A."/>
            <person name="Gill S.R."/>
            <person name="Gwinn M.L."/>
            <person name="Dodson R.J."/>
            <person name="Haft D.H."/>
            <person name="Hickey E.K."/>
            <person name="Peterson J.D."/>
            <person name="Nelson W.C."/>
            <person name="Ketchum K.A."/>
            <person name="McDonald L.A."/>
            <person name="Utterback T.R."/>
            <person name="Malek J.A."/>
            <person name="Linher K.D."/>
            <person name="Garrett M.M."/>
            <person name="Stewart A.M."/>
            <person name="Cotton M.D."/>
            <person name="Pratt M.S."/>
            <person name="Phillips C.A."/>
            <person name="Richardson D.L."/>
            <person name="Heidelberg J.F."/>
            <person name="Sutton G.G."/>
            <person name="Fleischmann R.D."/>
            <person name="Eisen J.A."/>
            <person name="White O."/>
            <person name="Salzberg S.L."/>
            <person name="Smith H.O."/>
            <person name="Venter J.C."/>
            <person name="Fraser C.M."/>
        </authorList>
    </citation>
    <scope>NUCLEOTIDE SEQUENCE [LARGE SCALE GENOMIC DNA]</scope>
    <source>
        <strain>ATCC 43589 / DSM 3109 / JCM 10099 / NBRC 100826 / MSB8</strain>
    </source>
</reference>